<evidence type="ECO:0000255" key="1">
    <source>
        <dbReference type="HAMAP-Rule" id="MF_00146"/>
    </source>
</evidence>
<feature type="chain" id="PRO_1000096436" description="dCTP deaminase">
    <location>
        <begin position="1"/>
        <end position="189"/>
    </location>
</feature>
<feature type="active site" description="Proton donor/acceptor" evidence="1">
    <location>
        <position position="138"/>
    </location>
</feature>
<feature type="binding site" evidence="1">
    <location>
        <begin position="112"/>
        <end position="117"/>
    </location>
    <ligand>
        <name>dCTP</name>
        <dbReference type="ChEBI" id="CHEBI:61481"/>
    </ligand>
</feature>
<feature type="binding site" evidence="1">
    <location>
        <begin position="136"/>
        <end position="138"/>
    </location>
    <ligand>
        <name>dCTP</name>
        <dbReference type="ChEBI" id="CHEBI:61481"/>
    </ligand>
</feature>
<feature type="binding site" evidence="1">
    <location>
        <position position="157"/>
    </location>
    <ligand>
        <name>dCTP</name>
        <dbReference type="ChEBI" id="CHEBI:61481"/>
    </ligand>
</feature>
<feature type="binding site" evidence="1">
    <location>
        <position position="171"/>
    </location>
    <ligand>
        <name>dCTP</name>
        <dbReference type="ChEBI" id="CHEBI:61481"/>
    </ligand>
</feature>
<feature type="binding site" evidence="1">
    <location>
        <position position="181"/>
    </location>
    <ligand>
        <name>dCTP</name>
        <dbReference type="ChEBI" id="CHEBI:61481"/>
    </ligand>
</feature>
<keyword id="KW-0378">Hydrolase</keyword>
<keyword id="KW-0546">Nucleotide metabolism</keyword>
<keyword id="KW-0547">Nucleotide-binding</keyword>
<keyword id="KW-1185">Reference proteome</keyword>
<protein>
    <recommendedName>
        <fullName evidence="1">dCTP deaminase</fullName>
        <ecNumber evidence="1">3.5.4.13</ecNumber>
    </recommendedName>
    <alternativeName>
        <fullName evidence="1">Deoxycytidine triphosphate deaminase</fullName>
    </alternativeName>
</protein>
<dbReference type="EC" id="3.5.4.13" evidence="1"/>
<dbReference type="EMBL" id="CP001013">
    <property type="protein sequence ID" value="ACB35005.1"/>
    <property type="molecule type" value="Genomic_DNA"/>
</dbReference>
<dbReference type="RefSeq" id="WP_012347759.1">
    <property type="nucleotide sequence ID" value="NC_010524.1"/>
</dbReference>
<dbReference type="SMR" id="B1XWK4"/>
<dbReference type="STRING" id="395495.Lcho_2740"/>
<dbReference type="KEGG" id="lch:Lcho_2740"/>
<dbReference type="eggNOG" id="COG0717">
    <property type="taxonomic scope" value="Bacteria"/>
</dbReference>
<dbReference type="HOGENOM" id="CLU_087476_4_0_4"/>
<dbReference type="OrthoDB" id="9780956at2"/>
<dbReference type="UniPathway" id="UPA00610">
    <property type="reaction ID" value="UER00665"/>
</dbReference>
<dbReference type="Proteomes" id="UP000001693">
    <property type="component" value="Chromosome"/>
</dbReference>
<dbReference type="GO" id="GO:0008829">
    <property type="term" value="F:dCTP deaminase activity"/>
    <property type="evidence" value="ECO:0007669"/>
    <property type="project" value="UniProtKB-UniRule"/>
</dbReference>
<dbReference type="GO" id="GO:0000166">
    <property type="term" value="F:nucleotide binding"/>
    <property type="evidence" value="ECO:0007669"/>
    <property type="project" value="UniProtKB-KW"/>
</dbReference>
<dbReference type="GO" id="GO:0006226">
    <property type="term" value="P:dUMP biosynthetic process"/>
    <property type="evidence" value="ECO:0007669"/>
    <property type="project" value="UniProtKB-UniPathway"/>
</dbReference>
<dbReference type="GO" id="GO:0006229">
    <property type="term" value="P:dUTP biosynthetic process"/>
    <property type="evidence" value="ECO:0007669"/>
    <property type="project" value="UniProtKB-UniRule"/>
</dbReference>
<dbReference type="GO" id="GO:0015949">
    <property type="term" value="P:nucleobase-containing small molecule interconversion"/>
    <property type="evidence" value="ECO:0007669"/>
    <property type="project" value="TreeGrafter"/>
</dbReference>
<dbReference type="CDD" id="cd07557">
    <property type="entry name" value="trimeric_dUTPase"/>
    <property type="match status" value="1"/>
</dbReference>
<dbReference type="FunFam" id="2.70.40.10:FF:000001">
    <property type="entry name" value="dCTP deaminase"/>
    <property type="match status" value="1"/>
</dbReference>
<dbReference type="Gene3D" id="2.70.40.10">
    <property type="match status" value="1"/>
</dbReference>
<dbReference type="HAMAP" id="MF_00146">
    <property type="entry name" value="dCTP_deaminase"/>
    <property type="match status" value="1"/>
</dbReference>
<dbReference type="InterPro" id="IPR011962">
    <property type="entry name" value="dCTP_deaminase"/>
</dbReference>
<dbReference type="InterPro" id="IPR036157">
    <property type="entry name" value="dUTPase-like_sf"/>
</dbReference>
<dbReference type="InterPro" id="IPR033704">
    <property type="entry name" value="dUTPase_trimeric"/>
</dbReference>
<dbReference type="NCBIfam" id="TIGR02274">
    <property type="entry name" value="dCTP_deam"/>
    <property type="match status" value="1"/>
</dbReference>
<dbReference type="PANTHER" id="PTHR42680">
    <property type="entry name" value="DCTP DEAMINASE"/>
    <property type="match status" value="1"/>
</dbReference>
<dbReference type="PANTHER" id="PTHR42680:SF3">
    <property type="entry name" value="DCTP DEAMINASE"/>
    <property type="match status" value="1"/>
</dbReference>
<dbReference type="Pfam" id="PF22769">
    <property type="entry name" value="DCD"/>
    <property type="match status" value="1"/>
</dbReference>
<dbReference type="SUPFAM" id="SSF51283">
    <property type="entry name" value="dUTPase-like"/>
    <property type="match status" value="1"/>
</dbReference>
<accession>B1XWK4</accession>
<comment type="function">
    <text evidence="1">Catalyzes the deamination of dCTP to dUTP.</text>
</comment>
<comment type="catalytic activity">
    <reaction evidence="1">
        <text>dCTP + H2O + H(+) = dUTP + NH4(+)</text>
        <dbReference type="Rhea" id="RHEA:22680"/>
        <dbReference type="ChEBI" id="CHEBI:15377"/>
        <dbReference type="ChEBI" id="CHEBI:15378"/>
        <dbReference type="ChEBI" id="CHEBI:28938"/>
        <dbReference type="ChEBI" id="CHEBI:61481"/>
        <dbReference type="ChEBI" id="CHEBI:61555"/>
        <dbReference type="EC" id="3.5.4.13"/>
    </reaction>
</comment>
<comment type="pathway">
    <text evidence="1">Pyrimidine metabolism; dUMP biosynthesis; dUMP from dCTP (dUTP route): step 1/2.</text>
</comment>
<comment type="subunit">
    <text evidence="1">Homotrimer.</text>
</comment>
<comment type="similarity">
    <text evidence="1">Belongs to the dCTP deaminase family.</text>
</comment>
<gene>
    <name evidence="1" type="primary">dcd</name>
    <name type="ordered locus">Lcho_2740</name>
</gene>
<proteinExistence type="inferred from homology"/>
<name>DCD_LEPCP</name>
<reference key="1">
    <citation type="submission" date="2008-03" db="EMBL/GenBank/DDBJ databases">
        <title>Complete sequence of Leptothrix cholodnii SP-6.</title>
        <authorList>
            <consortium name="US DOE Joint Genome Institute"/>
            <person name="Copeland A."/>
            <person name="Lucas S."/>
            <person name="Lapidus A."/>
            <person name="Glavina del Rio T."/>
            <person name="Dalin E."/>
            <person name="Tice H."/>
            <person name="Bruce D."/>
            <person name="Goodwin L."/>
            <person name="Pitluck S."/>
            <person name="Chertkov O."/>
            <person name="Brettin T."/>
            <person name="Detter J.C."/>
            <person name="Han C."/>
            <person name="Kuske C.R."/>
            <person name="Schmutz J."/>
            <person name="Larimer F."/>
            <person name="Land M."/>
            <person name="Hauser L."/>
            <person name="Kyrpides N."/>
            <person name="Lykidis A."/>
            <person name="Emerson D."/>
            <person name="Richardson P."/>
        </authorList>
    </citation>
    <scope>NUCLEOTIDE SEQUENCE [LARGE SCALE GENOMIC DNA]</scope>
    <source>
        <strain>ATCC 51168 / LMG 8142 / SP-6</strain>
    </source>
</reference>
<sequence length="189" mass="21331">MSIKSDKWIRRMAQESGMIEPFEPGQVRQSADGQKIVSYGTSSYGYDIRCAREFKVFTNIYSTVVDPKNFDEKSFVDIESDVCIIPPNSFALARTMEYFRIPRNVLTICLGKSTYARCGIIVNVTPFEPEWEGYVTLEFSNTTPLPAKIYAGEGCAQVLFFESDEVCETSYRDRGGKYQGQTGVTLPKT</sequence>
<organism>
    <name type="scientific">Leptothrix cholodnii (strain ATCC 51168 / LMG 8142 / SP-6)</name>
    <name type="common">Leptothrix discophora (strain SP-6)</name>
    <dbReference type="NCBI Taxonomy" id="395495"/>
    <lineage>
        <taxon>Bacteria</taxon>
        <taxon>Pseudomonadati</taxon>
        <taxon>Pseudomonadota</taxon>
        <taxon>Betaproteobacteria</taxon>
        <taxon>Burkholderiales</taxon>
        <taxon>Sphaerotilaceae</taxon>
        <taxon>Leptothrix</taxon>
    </lineage>
</organism>